<keyword id="KW-0028">Amino-acid biosynthesis</keyword>
<keyword id="KW-0067">ATP-binding</keyword>
<keyword id="KW-0963">Cytoplasm</keyword>
<keyword id="KW-0418">Kinase</keyword>
<keyword id="KW-0547">Nucleotide-binding</keyword>
<keyword id="KW-0791">Threonine biosynthesis</keyword>
<keyword id="KW-0808">Transferase</keyword>
<accession>A4FZP2</accession>
<feature type="chain" id="PRO_1000049143" description="Homoserine kinase">
    <location>
        <begin position="1"/>
        <end position="301"/>
    </location>
</feature>
<feature type="binding site" evidence="1">
    <location>
        <begin position="89"/>
        <end position="99"/>
    </location>
    <ligand>
        <name>ATP</name>
        <dbReference type="ChEBI" id="CHEBI:30616"/>
    </ligand>
</feature>
<comment type="function">
    <text evidence="1">Catalyzes the ATP-dependent phosphorylation of L-homoserine to L-homoserine phosphate.</text>
</comment>
<comment type="catalytic activity">
    <reaction evidence="1">
        <text>L-homoserine + ATP = O-phospho-L-homoserine + ADP + H(+)</text>
        <dbReference type="Rhea" id="RHEA:13985"/>
        <dbReference type="ChEBI" id="CHEBI:15378"/>
        <dbReference type="ChEBI" id="CHEBI:30616"/>
        <dbReference type="ChEBI" id="CHEBI:57476"/>
        <dbReference type="ChEBI" id="CHEBI:57590"/>
        <dbReference type="ChEBI" id="CHEBI:456216"/>
        <dbReference type="EC" id="2.7.1.39"/>
    </reaction>
</comment>
<comment type="pathway">
    <text evidence="1">Amino-acid biosynthesis; L-threonine biosynthesis; L-threonine from L-aspartate: step 4/5.</text>
</comment>
<comment type="subcellular location">
    <subcellularLocation>
        <location evidence="1">Cytoplasm</location>
    </subcellularLocation>
</comment>
<comment type="similarity">
    <text evidence="1">Belongs to the GHMP kinase family. Homoserine kinase subfamily.</text>
</comment>
<organism>
    <name type="scientific">Methanococcus maripaludis (strain C5 / ATCC BAA-1333)</name>
    <dbReference type="NCBI Taxonomy" id="402880"/>
    <lineage>
        <taxon>Archaea</taxon>
        <taxon>Methanobacteriati</taxon>
        <taxon>Methanobacteriota</taxon>
        <taxon>Methanomada group</taxon>
        <taxon>Methanococci</taxon>
        <taxon>Methanococcales</taxon>
        <taxon>Methanococcaceae</taxon>
        <taxon>Methanococcus</taxon>
    </lineage>
</organism>
<evidence type="ECO:0000255" key="1">
    <source>
        <dbReference type="HAMAP-Rule" id="MF_00384"/>
    </source>
</evidence>
<proteinExistence type="inferred from homology"/>
<name>KHSE_METM5</name>
<protein>
    <recommendedName>
        <fullName evidence="1">Homoserine kinase</fullName>
        <shortName evidence="1">HK</shortName>
        <shortName evidence="1">HSK</shortName>
        <ecNumber evidence="1">2.7.1.39</ecNumber>
    </recommendedName>
</protein>
<sequence>MKKVKVCSPGTSANLGPGYDIFGLALSKPYDILEVEKTEKGIIISVEGEKAEEIPTNVDENTAGVVAKKMMEDFNIQSGIHIHINKGIKPGSGLGSSSASCAGVAFALNELFELKLSKLELVKYSSLGEAVAAGAPHADNVAPAIFGGFTLTTSYDPLEVLHIPVDIEVLVALPNIQVSTKTAREILPKEIPIKYMVNNVGKAAGMVYALYNNDLELFGRYMSKDCVVEPCRANLIDGYAEVKEKVKDLVYGITISGSGPAIITIPKKEHVIDIENIFKEVWNCPVYYTKVGPGCYVEEIE</sequence>
<reference key="1">
    <citation type="submission" date="2007-03" db="EMBL/GenBank/DDBJ databases">
        <title>Complete sequence of chromosome of Methanococcus maripaludis C5.</title>
        <authorList>
            <consortium name="US DOE Joint Genome Institute"/>
            <person name="Copeland A."/>
            <person name="Lucas S."/>
            <person name="Lapidus A."/>
            <person name="Barry K."/>
            <person name="Glavina del Rio T."/>
            <person name="Dalin E."/>
            <person name="Tice H."/>
            <person name="Pitluck S."/>
            <person name="Chertkov O."/>
            <person name="Brettin T."/>
            <person name="Bruce D."/>
            <person name="Han C."/>
            <person name="Detter J.C."/>
            <person name="Schmutz J."/>
            <person name="Larimer F."/>
            <person name="Land M."/>
            <person name="Hauser L."/>
            <person name="Kyrpides N."/>
            <person name="Mikhailova N."/>
            <person name="Sieprawska-Lupa M."/>
            <person name="Whitman W.B."/>
            <person name="Richardson P."/>
        </authorList>
    </citation>
    <scope>NUCLEOTIDE SEQUENCE [LARGE SCALE GENOMIC DNA]</scope>
    <source>
        <strain>C5 / ATCC BAA-1333</strain>
    </source>
</reference>
<gene>
    <name evidence="1" type="primary">thrB</name>
    <name type="ordered locus">MmarC5_1378</name>
</gene>
<dbReference type="EC" id="2.7.1.39" evidence="1"/>
<dbReference type="EMBL" id="CP000609">
    <property type="protein sequence ID" value="ABO35676.1"/>
    <property type="molecule type" value="Genomic_DNA"/>
</dbReference>
<dbReference type="RefSeq" id="WP_011869127.1">
    <property type="nucleotide sequence ID" value="NC_009135.1"/>
</dbReference>
<dbReference type="SMR" id="A4FZP2"/>
<dbReference type="STRING" id="402880.MmarC5_1378"/>
<dbReference type="GeneID" id="4928205"/>
<dbReference type="KEGG" id="mmq:MmarC5_1378"/>
<dbReference type="eggNOG" id="arCOG01027">
    <property type="taxonomic scope" value="Archaea"/>
</dbReference>
<dbReference type="HOGENOM" id="CLU_041243_1_1_2"/>
<dbReference type="OrthoDB" id="28273at2157"/>
<dbReference type="UniPathway" id="UPA00050">
    <property type="reaction ID" value="UER00064"/>
</dbReference>
<dbReference type="Proteomes" id="UP000000253">
    <property type="component" value="Chromosome"/>
</dbReference>
<dbReference type="GO" id="GO:0005737">
    <property type="term" value="C:cytoplasm"/>
    <property type="evidence" value="ECO:0007669"/>
    <property type="project" value="UniProtKB-SubCell"/>
</dbReference>
<dbReference type="GO" id="GO:0005524">
    <property type="term" value="F:ATP binding"/>
    <property type="evidence" value="ECO:0007669"/>
    <property type="project" value="UniProtKB-UniRule"/>
</dbReference>
<dbReference type="GO" id="GO:0004413">
    <property type="term" value="F:homoserine kinase activity"/>
    <property type="evidence" value="ECO:0007669"/>
    <property type="project" value="UniProtKB-UniRule"/>
</dbReference>
<dbReference type="GO" id="GO:0009088">
    <property type="term" value="P:threonine biosynthetic process"/>
    <property type="evidence" value="ECO:0007669"/>
    <property type="project" value="UniProtKB-UniRule"/>
</dbReference>
<dbReference type="Gene3D" id="3.30.230.10">
    <property type="match status" value="1"/>
</dbReference>
<dbReference type="Gene3D" id="3.30.70.890">
    <property type="entry name" value="GHMP kinase, C-terminal domain"/>
    <property type="match status" value="1"/>
</dbReference>
<dbReference type="HAMAP" id="MF_00384">
    <property type="entry name" value="Homoser_kinase"/>
    <property type="match status" value="1"/>
</dbReference>
<dbReference type="InterPro" id="IPR013750">
    <property type="entry name" value="GHMP_kinase_C_dom"/>
</dbReference>
<dbReference type="InterPro" id="IPR036554">
    <property type="entry name" value="GHMP_kinase_C_sf"/>
</dbReference>
<dbReference type="InterPro" id="IPR006204">
    <property type="entry name" value="GHMP_kinase_N_dom"/>
</dbReference>
<dbReference type="InterPro" id="IPR006203">
    <property type="entry name" value="GHMP_knse_ATP-bd_CS"/>
</dbReference>
<dbReference type="InterPro" id="IPR000870">
    <property type="entry name" value="Homoserine_kinase"/>
</dbReference>
<dbReference type="InterPro" id="IPR020568">
    <property type="entry name" value="Ribosomal_Su5_D2-typ_SF"/>
</dbReference>
<dbReference type="InterPro" id="IPR014721">
    <property type="entry name" value="Ribsml_uS5_D2-typ_fold_subgr"/>
</dbReference>
<dbReference type="NCBIfam" id="NF002288">
    <property type="entry name" value="PRK01212.1-4"/>
    <property type="match status" value="1"/>
</dbReference>
<dbReference type="NCBIfam" id="TIGR00191">
    <property type="entry name" value="thrB"/>
    <property type="match status" value="1"/>
</dbReference>
<dbReference type="PANTHER" id="PTHR20861:SF1">
    <property type="entry name" value="HOMOSERINE KINASE"/>
    <property type="match status" value="1"/>
</dbReference>
<dbReference type="PANTHER" id="PTHR20861">
    <property type="entry name" value="HOMOSERINE/4-DIPHOSPHOCYTIDYL-2-C-METHYL-D-ERYTHRITOL KINASE"/>
    <property type="match status" value="1"/>
</dbReference>
<dbReference type="Pfam" id="PF08544">
    <property type="entry name" value="GHMP_kinases_C"/>
    <property type="match status" value="1"/>
</dbReference>
<dbReference type="Pfam" id="PF00288">
    <property type="entry name" value="GHMP_kinases_N"/>
    <property type="match status" value="1"/>
</dbReference>
<dbReference type="PIRSF" id="PIRSF000676">
    <property type="entry name" value="Homoser_kin"/>
    <property type="match status" value="1"/>
</dbReference>
<dbReference type="PRINTS" id="PR00958">
    <property type="entry name" value="HOMSERKINASE"/>
</dbReference>
<dbReference type="SUPFAM" id="SSF55060">
    <property type="entry name" value="GHMP Kinase, C-terminal domain"/>
    <property type="match status" value="1"/>
</dbReference>
<dbReference type="SUPFAM" id="SSF54211">
    <property type="entry name" value="Ribosomal protein S5 domain 2-like"/>
    <property type="match status" value="1"/>
</dbReference>
<dbReference type="PROSITE" id="PS00627">
    <property type="entry name" value="GHMP_KINASES_ATP"/>
    <property type="match status" value="1"/>
</dbReference>